<organism>
    <name type="scientific">Rhodopseudomonas palustris (strain BisA53)</name>
    <dbReference type="NCBI Taxonomy" id="316055"/>
    <lineage>
        <taxon>Bacteria</taxon>
        <taxon>Pseudomonadati</taxon>
        <taxon>Pseudomonadota</taxon>
        <taxon>Alphaproteobacteria</taxon>
        <taxon>Hyphomicrobiales</taxon>
        <taxon>Nitrobacteraceae</taxon>
        <taxon>Rhodopseudomonas</taxon>
    </lineage>
</organism>
<name>CYSD_RHOP5</name>
<feature type="chain" id="PRO_0000340216" description="Sulfate adenylyltransferase subunit 2">
    <location>
        <begin position="1"/>
        <end position="328"/>
    </location>
</feature>
<feature type="region of interest" description="Disordered" evidence="2">
    <location>
        <begin position="15"/>
        <end position="34"/>
    </location>
</feature>
<feature type="region of interest" description="Disordered" evidence="2">
    <location>
        <begin position="304"/>
        <end position="328"/>
    </location>
</feature>
<gene>
    <name evidence="1" type="primary">cysD</name>
    <name type="ordered locus">RPE_0334</name>
</gene>
<protein>
    <recommendedName>
        <fullName evidence="1">Sulfate adenylyltransferase subunit 2</fullName>
        <ecNumber evidence="1">2.7.7.4</ecNumber>
    </recommendedName>
    <alternativeName>
        <fullName evidence="1">ATP-sulfurylase small subunit</fullName>
    </alternativeName>
    <alternativeName>
        <fullName evidence="1">Sulfate adenylate transferase</fullName>
        <shortName evidence="1">SAT</shortName>
    </alternativeName>
</protein>
<evidence type="ECO:0000255" key="1">
    <source>
        <dbReference type="HAMAP-Rule" id="MF_00064"/>
    </source>
</evidence>
<evidence type="ECO:0000256" key="2">
    <source>
        <dbReference type="SAM" id="MobiDB-lite"/>
    </source>
</evidence>
<reference key="1">
    <citation type="submission" date="2006-09" db="EMBL/GenBank/DDBJ databases">
        <title>Complete sequence of Rhodopseudomonas palustris BisA53.</title>
        <authorList>
            <consortium name="US DOE Joint Genome Institute"/>
            <person name="Copeland A."/>
            <person name="Lucas S."/>
            <person name="Lapidus A."/>
            <person name="Barry K."/>
            <person name="Detter J.C."/>
            <person name="Glavina del Rio T."/>
            <person name="Hammon N."/>
            <person name="Israni S."/>
            <person name="Dalin E."/>
            <person name="Tice H."/>
            <person name="Pitluck S."/>
            <person name="Chain P."/>
            <person name="Malfatti S."/>
            <person name="Shin M."/>
            <person name="Vergez L."/>
            <person name="Schmutz J."/>
            <person name="Larimer F."/>
            <person name="Land M."/>
            <person name="Hauser L."/>
            <person name="Pelletier D.A."/>
            <person name="Kyrpides N."/>
            <person name="Kim E."/>
            <person name="Harwood C.S."/>
            <person name="Oda Y."/>
            <person name="Richardson P."/>
        </authorList>
    </citation>
    <scope>NUCLEOTIDE SEQUENCE [LARGE SCALE GENOMIC DNA]</scope>
    <source>
        <strain>BisA53</strain>
    </source>
</reference>
<sequence>MSDILDYPDVSSPAAAPDLADLGGEPARARPSSHLQRLESESIHILREVAAEFRKPVMLYSIGKDSSVLLHLAMKAFAPGKPPFPLLHVDTTWKFREMIAFRDQRIRELGLDLLVHVNPDGVAQRVGPFSHGSARHTDVMKTQALRQALDAHGFDAAIGGARRDEEKSRAKERIFSHRSAAHRWDPKNQRPELWSLYNTMLAPGESMRVFPLSNWTELDIWDYILIERIPIVPLYFAAERPVVERDGALILVDDERMPLRPGEVPQWRSVRFRTLGCYPLTGAVPSTATTLPAIVQEMMASRSSEREGRVIDRDSTASMERKKAEGYF</sequence>
<keyword id="KW-0067">ATP-binding</keyword>
<keyword id="KW-0547">Nucleotide-binding</keyword>
<keyword id="KW-0548">Nucleotidyltransferase</keyword>
<keyword id="KW-0808">Transferase</keyword>
<proteinExistence type="inferred from homology"/>
<comment type="function">
    <text evidence="1">With CysN forms the ATP sulfurylase (ATPS) that catalyzes the adenylation of sulfate producing adenosine 5'-phosphosulfate (APS) and diphosphate, the first enzymatic step in sulfur assimilation pathway. APS synthesis involves the formation of a high-energy phosphoric-sulfuric acid anhydride bond driven by GTP hydrolysis by CysN coupled to ATP hydrolysis by CysD.</text>
</comment>
<comment type="catalytic activity">
    <reaction evidence="1">
        <text>sulfate + ATP + H(+) = adenosine 5'-phosphosulfate + diphosphate</text>
        <dbReference type="Rhea" id="RHEA:18133"/>
        <dbReference type="ChEBI" id="CHEBI:15378"/>
        <dbReference type="ChEBI" id="CHEBI:16189"/>
        <dbReference type="ChEBI" id="CHEBI:30616"/>
        <dbReference type="ChEBI" id="CHEBI:33019"/>
        <dbReference type="ChEBI" id="CHEBI:58243"/>
        <dbReference type="EC" id="2.7.7.4"/>
    </reaction>
</comment>
<comment type="pathway">
    <text evidence="1">Sulfur metabolism; hydrogen sulfide biosynthesis; sulfite from sulfate: step 1/3.</text>
</comment>
<comment type="subunit">
    <text evidence="1">Heterodimer composed of CysD, the smaller subunit, and CysN.</text>
</comment>
<comment type="similarity">
    <text evidence="1">Belongs to the PAPS reductase family. CysD subfamily.</text>
</comment>
<dbReference type="EC" id="2.7.7.4" evidence="1"/>
<dbReference type="EMBL" id="CP000463">
    <property type="protein sequence ID" value="ABJ04293.1"/>
    <property type="molecule type" value="Genomic_DNA"/>
</dbReference>
<dbReference type="SMR" id="Q07UU1"/>
<dbReference type="STRING" id="316055.RPE_0334"/>
<dbReference type="KEGG" id="rpe:RPE_0334"/>
<dbReference type="eggNOG" id="COG0175">
    <property type="taxonomic scope" value="Bacteria"/>
</dbReference>
<dbReference type="HOGENOM" id="CLU_043026_0_0_5"/>
<dbReference type="OrthoDB" id="9772604at2"/>
<dbReference type="UniPathway" id="UPA00140">
    <property type="reaction ID" value="UER00204"/>
</dbReference>
<dbReference type="GO" id="GO:0005524">
    <property type="term" value="F:ATP binding"/>
    <property type="evidence" value="ECO:0007669"/>
    <property type="project" value="UniProtKB-KW"/>
</dbReference>
<dbReference type="GO" id="GO:0004781">
    <property type="term" value="F:sulfate adenylyltransferase (ATP) activity"/>
    <property type="evidence" value="ECO:0007669"/>
    <property type="project" value="UniProtKB-UniRule"/>
</dbReference>
<dbReference type="GO" id="GO:0070814">
    <property type="term" value="P:hydrogen sulfide biosynthetic process"/>
    <property type="evidence" value="ECO:0007669"/>
    <property type="project" value="UniProtKB-UniRule"/>
</dbReference>
<dbReference type="GO" id="GO:0000103">
    <property type="term" value="P:sulfate assimilation"/>
    <property type="evidence" value="ECO:0007669"/>
    <property type="project" value="UniProtKB-UniRule"/>
</dbReference>
<dbReference type="CDD" id="cd23946">
    <property type="entry name" value="Sulfate_adenylyltransferase_2"/>
    <property type="match status" value="1"/>
</dbReference>
<dbReference type="FunFam" id="3.40.50.620:FF:000002">
    <property type="entry name" value="Sulfate adenylyltransferase subunit 2"/>
    <property type="match status" value="1"/>
</dbReference>
<dbReference type="Gene3D" id="3.40.50.620">
    <property type="entry name" value="HUPs"/>
    <property type="match status" value="1"/>
</dbReference>
<dbReference type="HAMAP" id="MF_00064">
    <property type="entry name" value="Sulf_adenylyltr_sub2"/>
    <property type="match status" value="1"/>
</dbReference>
<dbReference type="InterPro" id="IPR002500">
    <property type="entry name" value="PAPS_reduct_dom"/>
</dbReference>
<dbReference type="InterPro" id="IPR014729">
    <property type="entry name" value="Rossmann-like_a/b/a_fold"/>
</dbReference>
<dbReference type="InterPro" id="IPR011784">
    <property type="entry name" value="SO4_adenylTrfase_ssu"/>
</dbReference>
<dbReference type="InterPro" id="IPR050128">
    <property type="entry name" value="Sulfate_adenylyltrnsfr_sub2"/>
</dbReference>
<dbReference type="NCBIfam" id="TIGR02039">
    <property type="entry name" value="CysD"/>
    <property type="match status" value="1"/>
</dbReference>
<dbReference type="NCBIfam" id="NF003587">
    <property type="entry name" value="PRK05253.1"/>
    <property type="match status" value="1"/>
</dbReference>
<dbReference type="NCBIfam" id="NF009214">
    <property type="entry name" value="PRK12563.1"/>
    <property type="match status" value="1"/>
</dbReference>
<dbReference type="PANTHER" id="PTHR43196">
    <property type="entry name" value="SULFATE ADENYLYLTRANSFERASE SUBUNIT 2"/>
    <property type="match status" value="1"/>
</dbReference>
<dbReference type="PANTHER" id="PTHR43196:SF1">
    <property type="entry name" value="SULFATE ADENYLYLTRANSFERASE SUBUNIT 2"/>
    <property type="match status" value="1"/>
</dbReference>
<dbReference type="Pfam" id="PF01507">
    <property type="entry name" value="PAPS_reduct"/>
    <property type="match status" value="1"/>
</dbReference>
<dbReference type="PIRSF" id="PIRSF002936">
    <property type="entry name" value="CysDAde_trans"/>
    <property type="match status" value="1"/>
</dbReference>
<dbReference type="SUPFAM" id="SSF52402">
    <property type="entry name" value="Adenine nucleotide alpha hydrolases-like"/>
    <property type="match status" value="1"/>
</dbReference>
<accession>Q07UU1</accession>